<proteinExistence type="evidence at protein level"/>
<feature type="signal peptide">
    <location>
        <begin position="1"/>
        <end position="18"/>
    </location>
</feature>
<feature type="chain" id="PRO_0000027642" description="Chymotrypsinogen B">
    <location>
        <begin position="19"/>
        <end position="263"/>
    </location>
</feature>
<feature type="chain" id="PRO_0000027643" description="Chymotrypsin B chain A">
    <location>
        <begin position="19"/>
        <end position="31"/>
    </location>
</feature>
<feature type="chain" id="PRO_0000027644" description="Chymotrypsin B chain B">
    <location>
        <begin position="34"/>
        <end position="164"/>
    </location>
</feature>
<feature type="chain" id="PRO_0000027645" description="Chymotrypsin B chain C">
    <location>
        <begin position="167"/>
        <end position="263"/>
    </location>
</feature>
<feature type="domain" description="Peptidase S1" evidence="3">
    <location>
        <begin position="34"/>
        <end position="261"/>
    </location>
</feature>
<feature type="active site" description="Charge relay system" evidence="1">
    <location>
        <position position="75"/>
    </location>
</feature>
<feature type="active site" description="Charge relay system" evidence="1">
    <location>
        <position position="120"/>
    </location>
</feature>
<feature type="active site" description="Charge relay system" evidence="1">
    <location>
        <position position="213"/>
    </location>
</feature>
<feature type="modified residue" description="Phosphoserine" evidence="2">
    <location>
        <position position="93"/>
    </location>
</feature>
<feature type="disulfide bond" evidence="3">
    <location>
        <begin position="19"/>
        <end position="140"/>
    </location>
</feature>
<feature type="disulfide bond">
    <location>
        <begin position="60"/>
        <end position="76"/>
    </location>
</feature>
<feature type="disulfide bond">
    <location>
        <begin position="154"/>
        <end position="219"/>
    </location>
</feature>
<feature type="disulfide bond" evidence="3">
    <location>
        <begin position="186"/>
        <end position="200"/>
    </location>
</feature>
<feature type="disulfide bond" evidence="3">
    <location>
        <begin position="209"/>
        <end position="238"/>
    </location>
</feature>
<feature type="strand" evidence="7">
    <location>
        <begin position="48"/>
        <end position="52"/>
    </location>
</feature>
<feature type="strand" evidence="7">
    <location>
        <begin position="58"/>
        <end position="72"/>
    </location>
</feature>
<feature type="strand" evidence="7">
    <location>
        <begin position="83"/>
        <end position="87"/>
    </location>
</feature>
<feature type="strand" evidence="6">
    <location>
        <begin position="90"/>
        <end position="93"/>
    </location>
</feature>
<feature type="strand" evidence="7">
    <location>
        <begin position="99"/>
        <end position="108"/>
    </location>
</feature>
<feature type="turn" evidence="7">
    <location>
        <begin position="114"/>
        <end position="116"/>
    </location>
</feature>
<feature type="strand" evidence="7">
    <location>
        <begin position="122"/>
        <end position="128"/>
    </location>
</feature>
<feature type="strand" evidence="7">
    <location>
        <begin position="133"/>
        <end position="135"/>
    </location>
</feature>
<feature type="strand" evidence="7">
    <location>
        <begin position="153"/>
        <end position="158"/>
    </location>
</feature>
<feature type="strand" evidence="7">
    <location>
        <begin position="174"/>
        <end position="181"/>
    </location>
</feature>
<feature type="helix" evidence="7">
    <location>
        <begin position="183"/>
        <end position="189"/>
    </location>
</feature>
<feature type="strand" evidence="7">
    <location>
        <begin position="198"/>
        <end position="201"/>
    </location>
</feature>
<feature type="strand" evidence="7">
    <location>
        <begin position="204"/>
        <end position="207"/>
    </location>
</feature>
<feature type="helix" evidence="7">
    <location>
        <begin position="208"/>
        <end position="210"/>
    </location>
</feature>
<feature type="strand" evidence="7">
    <location>
        <begin position="216"/>
        <end position="234"/>
    </location>
</feature>
<feature type="strand" evidence="6">
    <location>
        <begin position="239"/>
        <end position="242"/>
    </location>
</feature>
<feature type="strand" evidence="7">
    <location>
        <begin position="244"/>
        <end position="248"/>
    </location>
</feature>
<feature type="helix" evidence="7">
    <location>
        <begin position="249"/>
        <end position="260"/>
    </location>
</feature>
<keyword id="KW-0002">3D-structure</keyword>
<keyword id="KW-0222">Digestion</keyword>
<keyword id="KW-1015">Disulfide bond</keyword>
<keyword id="KW-0378">Hydrolase</keyword>
<keyword id="KW-0597">Phosphoprotein</keyword>
<keyword id="KW-0645">Protease</keyword>
<keyword id="KW-1185">Reference proteome</keyword>
<keyword id="KW-0964">Secreted</keyword>
<keyword id="KW-0720">Serine protease</keyword>
<keyword id="KW-0732">Signal</keyword>
<keyword id="KW-0865">Zymogen</keyword>
<comment type="catalytic activity">
    <reaction evidence="4 5">
        <text>Preferential cleavage: Tyr-|-Xaa, Trp-|-Xaa, Phe-|-Xaa, Leu-|-Xaa.</text>
        <dbReference type="EC" id="3.4.21.1"/>
    </reaction>
</comment>
<comment type="subcellular location">
    <subcellularLocation>
        <location>Secreted</location>
        <location>Extracellular space</location>
    </subcellularLocation>
</comment>
<comment type="similarity">
    <text evidence="3">Belongs to the peptidase S1 family.</text>
</comment>
<evidence type="ECO:0000250" key="1"/>
<evidence type="ECO:0000250" key="2">
    <source>
        <dbReference type="UniProtKB" id="Q9CR35"/>
    </source>
</evidence>
<evidence type="ECO:0000255" key="3">
    <source>
        <dbReference type="PROSITE-ProRule" id="PRU00274"/>
    </source>
</evidence>
<evidence type="ECO:0000255" key="4">
    <source>
        <dbReference type="PROSITE-ProRule" id="PRU10078"/>
    </source>
</evidence>
<evidence type="ECO:0000255" key="5">
    <source>
        <dbReference type="PROSITE-ProRule" id="PRU10079"/>
    </source>
</evidence>
<evidence type="ECO:0007829" key="6">
    <source>
        <dbReference type="PDB" id="1KDQ"/>
    </source>
</evidence>
<evidence type="ECO:0007829" key="7">
    <source>
        <dbReference type="PDB" id="2JET"/>
    </source>
</evidence>
<organism>
    <name type="scientific">Rattus norvegicus</name>
    <name type="common">Rat</name>
    <dbReference type="NCBI Taxonomy" id="10116"/>
    <lineage>
        <taxon>Eukaryota</taxon>
        <taxon>Metazoa</taxon>
        <taxon>Chordata</taxon>
        <taxon>Craniata</taxon>
        <taxon>Vertebrata</taxon>
        <taxon>Euteleostomi</taxon>
        <taxon>Mammalia</taxon>
        <taxon>Eutheria</taxon>
        <taxon>Euarchontoglires</taxon>
        <taxon>Glires</taxon>
        <taxon>Rodentia</taxon>
        <taxon>Myomorpha</taxon>
        <taxon>Muroidea</taxon>
        <taxon>Muridae</taxon>
        <taxon>Murinae</taxon>
        <taxon>Rattus</taxon>
    </lineage>
</organism>
<reference key="1">
    <citation type="journal article" date="1984" name="J. Biol. Chem.">
        <title>Isolation and sequence of a rat chymotrypsin B gene.</title>
        <authorList>
            <person name="Bell G.I."/>
            <person name="Quinto C."/>
            <person name="Quiroga M."/>
            <person name="Valenzuela P."/>
            <person name="Craik C.S."/>
            <person name="Rutter W.J."/>
        </authorList>
    </citation>
    <scope>NUCLEOTIDE SEQUENCE [GENOMIC DNA]</scope>
</reference>
<protein>
    <recommendedName>
        <fullName>Chymotrypsinogen B</fullName>
        <ecNumber>3.4.21.1</ecNumber>
    </recommendedName>
    <component>
        <recommendedName>
            <fullName>Chymotrypsin B chain A</fullName>
        </recommendedName>
    </component>
    <component>
        <recommendedName>
            <fullName>Chymotrypsin B chain B</fullName>
        </recommendedName>
    </component>
    <component>
        <recommendedName>
            <fullName>Chymotrypsin B chain C</fullName>
        </recommendedName>
    </component>
</protein>
<name>CTRB1_RAT</name>
<gene>
    <name type="primary">Ctrb1</name>
    <name type="synonym">Ctrb</name>
</gene>
<dbReference type="EC" id="3.4.21.1"/>
<dbReference type="EMBL" id="K02298">
    <property type="protein sequence ID" value="AAA98732.1"/>
    <property type="molecule type" value="Genomic_DNA"/>
</dbReference>
<dbReference type="PIR" id="A22658">
    <property type="entry name" value="KYRTB"/>
</dbReference>
<dbReference type="RefSeq" id="NP_036668.1">
    <property type="nucleotide sequence ID" value="NM_012536.1"/>
</dbReference>
<dbReference type="PDB" id="1KDQ">
    <property type="method" value="X-ray"/>
    <property type="resolution" value="2.55 A"/>
    <property type="chains" value="A=34-164, B=165-263"/>
</dbReference>
<dbReference type="PDB" id="2JET">
    <property type="method" value="X-ray"/>
    <property type="resolution" value="2.20 A"/>
    <property type="chains" value="A=19-28, B=37-164, C=165-263"/>
</dbReference>
<dbReference type="PDBsum" id="1KDQ"/>
<dbReference type="PDBsum" id="2JET"/>
<dbReference type="SMR" id="P07338"/>
<dbReference type="FunCoup" id="P07338">
    <property type="interactions" value="113"/>
</dbReference>
<dbReference type="STRING" id="10116.ENSRNOP00000026017"/>
<dbReference type="MEROPS" id="S01.152"/>
<dbReference type="iPTMnet" id="P07338"/>
<dbReference type="PhosphoSitePlus" id="P07338"/>
<dbReference type="PaxDb" id="10116-ENSRNOP00000026017"/>
<dbReference type="GeneID" id="24291"/>
<dbReference type="KEGG" id="rno:24291"/>
<dbReference type="UCSC" id="RGD:2444">
    <property type="organism name" value="rat"/>
</dbReference>
<dbReference type="AGR" id="RGD:2444"/>
<dbReference type="CTD" id="1504"/>
<dbReference type="RGD" id="2444">
    <property type="gene designation" value="Ctrb1"/>
</dbReference>
<dbReference type="eggNOG" id="KOG3627">
    <property type="taxonomic scope" value="Eukaryota"/>
</dbReference>
<dbReference type="InParanoid" id="P07338"/>
<dbReference type="OrthoDB" id="5918597at2759"/>
<dbReference type="PhylomeDB" id="P07338"/>
<dbReference type="BRENDA" id="3.4.21.1">
    <property type="organism ID" value="5301"/>
</dbReference>
<dbReference type="Reactome" id="R-RNO-1592389">
    <property type="pathway name" value="Activation of Matrix Metalloproteinases"/>
</dbReference>
<dbReference type="EvolutionaryTrace" id="P07338"/>
<dbReference type="PRO" id="PR:P07338"/>
<dbReference type="Proteomes" id="UP000002494">
    <property type="component" value="Unplaced"/>
</dbReference>
<dbReference type="GO" id="GO:0005576">
    <property type="term" value="C:extracellular region"/>
    <property type="evidence" value="ECO:0007669"/>
    <property type="project" value="UniProtKB-SubCell"/>
</dbReference>
<dbReference type="GO" id="GO:0008233">
    <property type="term" value="F:peptidase activity"/>
    <property type="evidence" value="ECO:0000266"/>
    <property type="project" value="RGD"/>
</dbReference>
<dbReference type="GO" id="GO:0004252">
    <property type="term" value="F:serine-type endopeptidase activity"/>
    <property type="evidence" value="ECO:0000314"/>
    <property type="project" value="RGD"/>
</dbReference>
<dbReference type="GO" id="GO:0008236">
    <property type="term" value="F:serine-type peptidase activity"/>
    <property type="evidence" value="ECO:0000266"/>
    <property type="project" value="RGD"/>
</dbReference>
<dbReference type="GO" id="GO:0007586">
    <property type="term" value="P:digestion"/>
    <property type="evidence" value="ECO:0007669"/>
    <property type="project" value="UniProtKB-KW"/>
</dbReference>
<dbReference type="GO" id="GO:0043065">
    <property type="term" value="P:positive regulation of apoptotic process"/>
    <property type="evidence" value="ECO:0000315"/>
    <property type="project" value="RGD"/>
</dbReference>
<dbReference type="GO" id="GO:0030163">
    <property type="term" value="P:protein catabolic process"/>
    <property type="evidence" value="ECO:0000314"/>
    <property type="project" value="RGD"/>
</dbReference>
<dbReference type="GO" id="GO:0006508">
    <property type="term" value="P:proteolysis"/>
    <property type="evidence" value="ECO:0000266"/>
    <property type="project" value="RGD"/>
</dbReference>
<dbReference type="GO" id="GO:0034097">
    <property type="term" value="P:response to cytokine"/>
    <property type="evidence" value="ECO:0000314"/>
    <property type="project" value="RGD"/>
</dbReference>
<dbReference type="GO" id="GO:0032094">
    <property type="term" value="P:response to food"/>
    <property type="evidence" value="ECO:0000270"/>
    <property type="project" value="RGD"/>
</dbReference>
<dbReference type="GO" id="GO:0007584">
    <property type="term" value="P:response to nutrient"/>
    <property type="evidence" value="ECO:0000270"/>
    <property type="project" value="RGD"/>
</dbReference>
<dbReference type="GO" id="GO:0043434">
    <property type="term" value="P:response to peptide hormone"/>
    <property type="evidence" value="ECO:0000270"/>
    <property type="project" value="RGD"/>
</dbReference>
<dbReference type="GO" id="GO:0009636">
    <property type="term" value="P:response to toxic substance"/>
    <property type="evidence" value="ECO:0000270"/>
    <property type="project" value="RGD"/>
</dbReference>
<dbReference type="CDD" id="cd00190">
    <property type="entry name" value="Tryp_SPc"/>
    <property type="match status" value="1"/>
</dbReference>
<dbReference type="FunFam" id="2.40.10.10:FF:000118">
    <property type="entry name" value="Chymotrypsinogen A"/>
    <property type="match status" value="1"/>
</dbReference>
<dbReference type="FunFam" id="2.40.10.10:FF:000176">
    <property type="entry name" value="Chymotrypsinogen A"/>
    <property type="match status" value="1"/>
</dbReference>
<dbReference type="Gene3D" id="2.40.10.10">
    <property type="entry name" value="Trypsin-like serine proteases"/>
    <property type="match status" value="3"/>
</dbReference>
<dbReference type="InterPro" id="IPR009003">
    <property type="entry name" value="Peptidase_S1_PA"/>
</dbReference>
<dbReference type="InterPro" id="IPR043504">
    <property type="entry name" value="Peptidase_S1_PA_chymotrypsin"/>
</dbReference>
<dbReference type="InterPro" id="IPR001314">
    <property type="entry name" value="Peptidase_S1A"/>
</dbReference>
<dbReference type="InterPro" id="IPR001254">
    <property type="entry name" value="Trypsin_dom"/>
</dbReference>
<dbReference type="InterPro" id="IPR018114">
    <property type="entry name" value="TRYPSIN_HIS"/>
</dbReference>
<dbReference type="InterPro" id="IPR033116">
    <property type="entry name" value="TRYPSIN_SER"/>
</dbReference>
<dbReference type="PANTHER" id="PTHR24250">
    <property type="entry name" value="CHYMOTRYPSIN-RELATED"/>
    <property type="match status" value="1"/>
</dbReference>
<dbReference type="PANTHER" id="PTHR24250:SF65">
    <property type="entry name" value="CHYMOTRYPSINOGEN B"/>
    <property type="match status" value="1"/>
</dbReference>
<dbReference type="Pfam" id="PF00089">
    <property type="entry name" value="Trypsin"/>
    <property type="match status" value="1"/>
</dbReference>
<dbReference type="PRINTS" id="PR00722">
    <property type="entry name" value="CHYMOTRYPSIN"/>
</dbReference>
<dbReference type="SMART" id="SM00020">
    <property type="entry name" value="Tryp_SPc"/>
    <property type="match status" value="1"/>
</dbReference>
<dbReference type="SUPFAM" id="SSF50494">
    <property type="entry name" value="Trypsin-like serine proteases"/>
    <property type="match status" value="1"/>
</dbReference>
<dbReference type="PROSITE" id="PS50240">
    <property type="entry name" value="TRYPSIN_DOM"/>
    <property type="match status" value="1"/>
</dbReference>
<dbReference type="PROSITE" id="PS00134">
    <property type="entry name" value="TRYPSIN_HIS"/>
    <property type="match status" value="1"/>
</dbReference>
<dbReference type="PROSITE" id="PS00135">
    <property type="entry name" value="TRYPSIN_SER"/>
    <property type="match status" value="1"/>
</dbReference>
<accession>P07338</accession>
<sequence length="263" mass="27849">MAFLWLVSCFALVGATFGCGVPTIQPVLTGLSRIVNGEDAIPGSWPWQVSLQDKTGFHFCGGSLISEDWVVTAAHCGVKTSDVVVAGEFDQGSDEENIQVLKIAQVFKNPKFNMFTVRNDITLLKLATPAQFSETVSAVCLPNVDDDFPPGTVCATTGWGKTKYNALKTPEKLQQAALPIVSEADCKKSWGSKITDVMTCAGASGVSSCMGDSGGPLVCQKDGVWTLAGIVSWGSGVCSTSTPAVYSRVTALMPWVQQILEAN</sequence>